<comment type="function">
    <text evidence="1 3">May act as a positive regulator of ERK phosphorylation downstream of fibroblast growth factor-receptor activation. May induce both caspase-dependent apoptosis and caspase-independent cell death. May play a role in the embryonic development.</text>
</comment>
<comment type="catalytic activity">
    <reaction>
        <text>L-seryl-[protein] + ATP = O-phospho-L-seryl-[protein] + ADP + H(+)</text>
        <dbReference type="Rhea" id="RHEA:17989"/>
        <dbReference type="Rhea" id="RHEA-COMP:9863"/>
        <dbReference type="Rhea" id="RHEA-COMP:11604"/>
        <dbReference type="ChEBI" id="CHEBI:15378"/>
        <dbReference type="ChEBI" id="CHEBI:29999"/>
        <dbReference type="ChEBI" id="CHEBI:30616"/>
        <dbReference type="ChEBI" id="CHEBI:83421"/>
        <dbReference type="ChEBI" id="CHEBI:456216"/>
        <dbReference type="EC" id="2.7.12.1"/>
    </reaction>
</comment>
<comment type="catalytic activity">
    <reaction>
        <text>L-threonyl-[protein] + ATP = O-phospho-L-threonyl-[protein] + ADP + H(+)</text>
        <dbReference type="Rhea" id="RHEA:46608"/>
        <dbReference type="Rhea" id="RHEA-COMP:11060"/>
        <dbReference type="Rhea" id="RHEA-COMP:11605"/>
        <dbReference type="ChEBI" id="CHEBI:15378"/>
        <dbReference type="ChEBI" id="CHEBI:30013"/>
        <dbReference type="ChEBI" id="CHEBI:30616"/>
        <dbReference type="ChEBI" id="CHEBI:61977"/>
        <dbReference type="ChEBI" id="CHEBI:456216"/>
        <dbReference type="EC" id="2.7.12.1"/>
    </reaction>
</comment>
<comment type="catalytic activity">
    <reaction>
        <text>L-tyrosyl-[protein] + ATP = O-phospho-L-tyrosyl-[protein] + ADP + H(+)</text>
        <dbReference type="Rhea" id="RHEA:10596"/>
        <dbReference type="Rhea" id="RHEA-COMP:10136"/>
        <dbReference type="Rhea" id="RHEA-COMP:20101"/>
        <dbReference type="ChEBI" id="CHEBI:15378"/>
        <dbReference type="ChEBI" id="CHEBI:30616"/>
        <dbReference type="ChEBI" id="CHEBI:46858"/>
        <dbReference type="ChEBI" id="CHEBI:61978"/>
        <dbReference type="ChEBI" id="CHEBI:456216"/>
        <dbReference type="EC" id="2.7.12.1"/>
    </reaction>
</comment>
<comment type="subcellular location">
    <subcellularLocation>
        <location evidence="2">Cytoplasm</location>
    </subcellularLocation>
    <subcellularLocation>
        <location evidence="2">Cell membrane</location>
    </subcellularLocation>
    <subcellularLocation>
        <location evidence="2">Apical cell membrane</location>
    </subcellularLocation>
    <subcellularLocation>
        <location evidence="2">Basolateral cell membrane</location>
    </subcellularLocation>
    <subcellularLocation>
        <location evidence="2">Cell junction</location>
    </subcellularLocation>
</comment>
<comment type="similarity">
    <text evidence="4">Belongs to the protein kinase superfamily. Ser/Thr protein kinase family.</text>
</comment>
<proteinExistence type="evidence at transcript level"/>
<reference key="1">
    <citation type="journal article" date="2006" name="Biochim. Biophys. Acta">
        <title>Dusty protein kinases: primary structure, gene evolution, tissue specific expression and unique features of the catalytic domain.</title>
        <authorList>
            <person name="Peng J."/>
            <person name="Dong W."/>
            <person name="Chen Y."/>
            <person name="Mo R."/>
            <person name="Cheng J.-F."/>
            <person name="Hui C.-C."/>
            <person name="Mohandas N."/>
            <person name="Huang C.-H."/>
        </authorList>
    </citation>
    <scope>NUCLEOTIDE SEQUENCE [MRNA]</scope>
    <source>
        <tissue>Brain</tissue>
    </source>
</reference>
<reference key="2">
    <citation type="submission" date="2005-06" db="EMBL/GenBank/DDBJ databases">
        <authorList>
            <consortium name="NIH - Xenopus Gene Collection (XGC) project"/>
        </authorList>
    </citation>
    <scope>NUCLEOTIDE SEQUENCE [LARGE SCALE MRNA]</scope>
    <source>
        <tissue>Embryo</tissue>
    </source>
</reference>
<protein>
    <recommendedName>
        <fullName>Dual serine/threonine and tyrosine protein kinase</fullName>
        <ecNumber>2.7.12.1</ecNumber>
    </recommendedName>
    <alternativeName>
        <fullName>Dusty protein kinase</fullName>
        <shortName>Dusty PK</shortName>
    </alternativeName>
    <alternativeName>
        <fullName>Receptor-interacting serine/threonine-protein kinase 5</fullName>
    </alternativeName>
</protein>
<feature type="chain" id="PRO_0000233125" description="Dual serine/threonine and tyrosine protein kinase">
    <location>
        <begin position="1"/>
        <end position="916"/>
    </location>
</feature>
<feature type="domain" description="Protein kinase" evidence="4">
    <location>
        <begin position="641"/>
        <end position="895"/>
    </location>
</feature>
<feature type="region of interest" description="Disordered" evidence="6">
    <location>
        <begin position="1"/>
        <end position="27"/>
    </location>
</feature>
<feature type="compositionally biased region" description="Basic and acidic residues" evidence="6">
    <location>
        <begin position="1"/>
        <end position="19"/>
    </location>
</feature>
<feature type="active site" description="Proton acceptor" evidence="4 5">
    <location>
        <position position="766"/>
    </location>
</feature>
<feature type="binding site" evidence="4">
    <location>
        <begin position="647"/>
        <end position="655"/>
    </location>
    <ligand>
        <name>ATP</name>
        <dbReference type="ChEBI" id="CHEBI:30616"/>
    </ligand>
</feature>
<feature type="binding site" evidence="4">
    <location>
        <position position="670"/>
    </location>
    <ligand>
        <name>ATP</name>
        <dbReference type="ChEBI" id="CHEBI:30616"/>
    </ligand>
</feature>
<feature type="sequence conflict" description="In Ref. 2; AAH97571." evidence="7" ref="2">
    <original>E</original>
    <variation>K</variation>
    <location>
        <position position="605"/>
    </location>
</feature>
<feature type="sequence conflict" description="In Ref. 2; AAH97571." evidence="7" ref="2">
    <original>S</original>
    <variation>T</variation>
    <location>
        <position position="739"/>
    </location>
</feature>
<feature type="sequence conflict" description="In Ref. 2; AAH97571." evidence="7" ref="2">
    <original>V</original>
    <variation>L</variation>
    <location>
        <position position="762"/>
    </location>
</feature>
<feature type="sequence conflict" description="In Ref. 2; AAH97571." evidence="7" ref="2">
    <original>ETGKALEDST</original>
    <variation>KKRKKKKKKKKKK</variation>
    <location>
        <begin position="907"/>
        <end position="916"/>
    </location>
</feature>
<evidence type="ECO:0000250" key="1">
    <source>
        <dbReference type="UniProtKB" id="Q4VSN1"/>
    </source>
</evidence>
<evidence type="ECO:0000250" key="2">
    <source>
        <dbReference type="UniProtKB" id="Q6XUX1"/>
    </source>
</evidence>
<evidence type="ECO:0000250" key="3">
    <source>
        <dbReference type="UniProtKB" id="Q6XUX3"/>
    </source>
</evidence>
<evidence type="ECO:0000255" key="4">
    <source>
        <dbReference type="PROSITE-ProRule" id="PRU00159"/>
    </source>
</evidence>
<evidence type="ECO:0000255" key="5">
    <source>
        <dbReference type="PROSITE-ProRule" id="PRU10027"/>
    </source>
</evidence>
<evidence type="ECO:0000256" key="6">
    <source>
        <dbReference type="SAM" id="MobiDB-lite"/>
    </source>
</evidence>
<evidence type="ECO:0000305" key="7"/>
<keyword id="KW-0067">ATP-binding</keyword>
<keyword id="KW-0965">Cell junction</keyword>
<keyword id="KW-1003">Cell membrane</keyword>
<keyword id="KW-0963">Cytoplasm</keyword>
<keyword id="KW-0217">Developmental protein</keyword>
<keyword id="KW-0418">Kinase</keyword>
<keyword id="KW-0472">Membrane</keyword>
<keyword id="KW-0547">Nucleotide-binding</keyword>
<keyword id="KW-1185">Reference proteome</keyword>
<keyword id="KW-0723">Serine/threonine-protein kinase</keyword>
<keyword id="KW-0808">Transferase</keyword>
<keyword id="KW-0829">Tyrosine-protein kinase</keyword>
<organism>
    <name type="scientific">Xenopus laevis</name>
    <name type="common">African clawed frog</name>
    <dbReference type="NCBI Taxonomy" id="8355"/>
    <lineage>
        <taxon>Eukaryota</taxon>
        <taxon>Metazoa</taxon>
        <taxon>Chordata</taxon>
        <taxon>Craniata</taxon>
        <taxon>Vertebrata</taxon>
        <taxon>Euteleostomi</taxon>
        <taxon>Amphibia</taxon>
        <taxon>Batrachia</taxon>
        <taxon>Anura</taxon>
        <taxon>Pipoidea</taxon>
        <taxon>Pipidae</taxon>
        <taxon>Xenopodinae</taxon>
        <taxon>Xenopus</taxon>
        <taxon>Xenopus</taxon>
    </lineage>
</organism>
<sequence>MQRDGTRSARRMDEGDRRTGSAGRSGSRELGRGFSYYNKYLARLQQNLRDTKRFFRDIKLTYSGAPGGPDTEFSGAEGEFGQLHSITFPRQEEEYLKLTVRCRPCIFILGQNCSGRGRVANGLLGGQLLPILTHGDIECCKRRRIRFRHGKQTLVSLALPEQYELVHQLVAHQGKWDTIPEEDLDVPEDEEDPAHRLAELEVTLPHQLLQDVDIVVSPCRSSQAVSMTLEDYVDHVQSIVVYAVSEEMLSKQDEEELTEIKEKYKLPVFFIRTSSTKDRLIGGSEGVRSVLYEQLIELGYLQRGLCNCGAAGSGSTAPSMLVEQFEKIRQLSTFSRQVLQMHLVDAAIVLNMVHSRCLDLFINKAFDMHRDLQITPKRLEYTRQKENELYESLMRISDRKQEELKDMIVETLNSMREQLLEDAANMQFKDIVIPQNGEPVSAHEVKCCIFQIKELIISRLNQAVVNKLISSVDYLRESFVGTMERCLRSLEKSQQESSSHVTSNHLKQILNAAYHVEVTFNSGSTVTRMVWEQIVQIIQRITWVSPPTITPEWKRRVAQDAIETLSASKLAKSICSQFCKRLKSSHEAFAASLKQLEVGHSGRLEKTNDLWLRVRKDHAPRLARLSLESRSLQDVLLHGKPRIGRELGRGQYGVVYLCDSWGGHFPCALKSVVPPDEKHWNDLALEFHYMRSLPKHERLVDLHGSVIDYSYGGGSSIAVLLITERLHRDLYVGLKTGLSLETRLQIALDVVEGIRFLHNQGVVHRDIKLKNVLLDKKHRAKITDLGFCKPEAMMSGSIVGTPIHMAPELFSGKYDNSVDVYAFGILFWYICSGSVKLPEAFEKCASKDHLWNNVRKGARPERLTIFDEECWKLMEACWNGDPSQRPLMGIVQPMLQGIMDRLCHTQETGKALEDST</sequence>
<dbReference type="EC" id="2.7.12.1"/>
<dbReference type="EMBL" id="AY364232">
    <property type="protein sequence ID" value="AAR13047.1"/>
    <property type="molecule type" value="mRNA"/>
</dbReference>
<dbReference type="EMBL" id="AY429678">
    <property type="protein sequence ID" value="AAS55394.1"/>
    <property type="molecule type" value="mRNA"/>
</dbReference>
<dbReference type="EMBL" id="BC097571">
    <property type="protein sequence ID" value="AAH97571.1"/>
    <property type="molecule type" value="mRNA"/>
</dbReference>
<dbReference type="RefSeq" id="NP_001087088.1">
    <property type="nucleotide sequence ID" value="NM_001093619.1"/>
</dbReference>
<dbReference type="SMR" id="Q67E01"/>
<dbReference type="GeneID" id="446954"/>
<dbReference type="KEGG" id="xla:446954"/>
<dbReference type="AGR" id="Xenbase:XB-GENE-971404"/>
<dbReference type="CTD" id="446954"/>
<dbReference type="Xenbase" id="XB-GENE-971404">
    <property type="gene designation" value="dstyk.S"/>
</dbReference>
<dbReference type="OrthoDB" id="122279at2759"/>
<dbReference type="Proteomes" id="UP000186698">
    <property type="component" value="Chromosome 2S"/>
</dbReference>
<dbReference type="Bgee" id="446954">
    <property type="expression patterns" value="Expressed in egg cell and 19 other cell types or tissues"/>
</dbReference>
<dbReference type="GO" id="GO:0070161">
    <property type="term" value="C:anchoring junction"/>
    <property type="evidence" value="ECO:0007669"/>
    <property type="project" value="UniProtKB-SubCell"/>
</dbReference>
<dbReference type="GO" id="GO:0016324">
    <property type="term" value="C:apical plasma membrane"/>
    <property type="evidence" value="ECO:0000250"/>
    <property type="project" value="UniProtKB"/>
</dbReference>
<dbReference type="GO" id="GO:0016323">
    <property type="term" value="C:basolateral plasma membrane"/>
    <property type="evidence" value="ECO:0000250"/>
    <property type="project" value="UniProtKB"/>
</dbReference>
<dbReference type="GO" id="GO:0005737">
    <property type="term" value="C:cytoplasm"/>
    <property type="evidence" value="ECO:0000250"/>
    <property type="project" value="UniProtKB"/>
</dbReference>
<dbReference type="GO" id="GO:0005524">
    <property type="term" value="F:ATP binding"/>
    <property type="evidence" value="ECO:0007669"/>
    <property type="project" value="UniProtKB-KW"/>
</dbReference>
<dbReference type="GO" id="GO:0106310">
    <property type="term" value="F:protein serine kinase activity"/>
    <property type="evidence" value="ECO:0007669"/>
    <property type="project" value="RHEA"/>
</dbReference>
<dbReference type="GO" id="GO:0004674">
    <property type="term" value="F:protein serine/threonine kinase activity"/>
    <property type="evidence" value="ECO:0007669"/>
    <property type="project" value="UniProtKB-KW"/>
</dbReference>
<dbReference type="GO" id="GO:0004712">
    <property type="term" value="F:protein serine/threonine/tyrosine kinase activity"/>
    <property type="evidence" value="ECO:0007669"/>
    <property type="project" value="UniProtKB-EC"/>
</dbReference>
<dbReference type="GO" id="GO:0004713">
    <property type="term" value="F:protein tyrosine kinase activity"/>
    <property type="evidence" value="ECO:0007669"/>
    <property type="project" value="UniProtKB-KW"/>
</dbReference>
<dbReference type="GO" id="GO:0044344">
    <property type="term" value="P:cellular response to fibroblast growth factor stimulus"/>
    <property type="evidence" value="ECO:0000318"/>
    <property type="project" value="GO_Central"/>
</dbReference>
<dbReference type="GO" id="GO:0048568">
    <property type="term" value="P:embryonic organ development"/>
    <property type="evidence" value="ECO:0000250"/>
    <property type="project" value="UniProtKB"/>
</dbReference>
<dbReference type="GO" id="GO:0043066">
    <property type="term" value="P:negative regulation of apoptotic process"/>
    <property type="evidence" value="ECO:0000318"/>
    <property type="project" value="GO_Central"/>
</dbReference>
<dbReference type="GO" id="GO:0070374">
    <property type="term" value="P:positive regulation of ERK1 and ERK2 cascade"/>
    <property type="evidence" value="ECO:0000318"/>
    <property type="project" value="GO_Central"/>
</dbReference>
<dbReference type="GO" id="GO:0045743">
    <property type="term" value="P:positive regulation of fibroblast growth factor receptor signaling pathway"/>
    <property type="evidence" value="ECO:0000318"/>
    <property type="project" value="GO_Central"/>
</dbReference>
<dbReference type="CDD" id="cd13975">
    <property type="entry name" value="PKc_Dusty"/>
    <property type="match status" value="1"/>
</dbReference>
<dbReference type="FunFam" id="1.10.510.10:FF:000244">
    <property type="entry name" value="Dual serine/threonine and tyrosine protein kinase"/>
    <property type="match status" value="1"/>
</dbReference>
<dbReference type="Gene3D" id="3.30.200.20">
    <property type="entry name" value="Phosphorylase Kinase, domain 1"/>
    <property type="match status" value="1"/>
</dbReference>
<dbReference type="Gene3D" id="1.10.510.10">
    <property type="entry name" value="Transferase(Phosphotransferase) domain 1"/>
    <property type="match status" value="1"/>
</dbReference>
<dbReference type="InterPro" id="IPR051302">
    <property type="entry name" value="Dual_SerThr-Tyr_Kinase"/>
</dbReference>
<dbReference type="InterPro" id="IPR011009">
    <property type="entry name" value="Kinase-like_dom_sf"/>
</dbReference>
<dbReference type="InterPro" id="IPR000719">
    <property type="entry name" value="Prot_kinase_dom"/>
</dbReference>
<dbReference type="InterPro" id="IPR017441">
    <property type="entry name" value="Protein_kinase_ATP_BS"/>
</dbReference>
<dbReference type="InterPro" id="IPR008271">
    <property type="entry name" value="Ser/Thr_kinase_AS"/>
</dbReference>
<dbReference type="PANTHER" id="PTHR46392">
    <property type="entry name" value="DUAL SERINE/THREONINE AND TYROSINE PROTEIN KINASE"/>
    <property type="match status" value="1"/>
</dbReference>
<dbReference type="PANTHER" id="PTHR46392:SF1">
    <property type="entry name" value="DUAL SERINE_THREONINE AND TYROSINE PROTEIN KINASE"/>
    <property type="match status" value="1"/>
</dbReference>
<dbReference type="Pfam" id="PF00069">
    <property type="entry name" value="Pkinase"/>
    <property type="match status" value="1"/>
</dbReference>
<dbReference type="SMART" id="SM00220">
    <property type="entry name" value="S_TKc"/>
    <property type="match status" value="1"/>
</dbReference>
<dbReference type="SUPFAM" id="SSF56112">
    <property type="entry name" value="Protein kinase-like (PK-like)"/>
    <property type="match status" value="1"/>
</dbReference>
<dbReference type="PROSITE" id="PS00107">
    <property type="entry name" value="PROTEIN_KINASE_ATP"/>
    <property type="match status" value="1"/>
</dbReference>
<dbReference type="PROSITE" id="PS50011">
    <property type="entry name" value="PROTEIN_KINASE_DOM"/>
    <property type="match status" value="1"/>
</dbReference>
<dbReference type="PROSITE" id="PS00108">
    <property type="entry name" value="PROTEIN_KINASE_ST"/>
    <property type="match status" value="1"/>
</dbReference>
<gene>
    <name type="primary">dstyk</name>
    <name type="synonym">ripk5</name>
</gene>
<name>DUSTY_XENLA</name>
<accession>Q67E01</accession>
<accession>Q4QR51</accession>